<sequence length="89" mass="10561">MAITQERKTQLISEFKTHESDTGSPEVQIAVLTESINNLNEHLRTHKKDHHSRRGLLKMVGRRRNLLTYLRNKDVTRYRELINKLGLRR</sequence>
<feature type="chain" id="PRO_1000067686" description="Small ribosomal subunit protein uS15">
    <location>
        <begin position="1"/>
        <end position="89"/>
    </location>
</feature>
<accession>A8FDD6</accession>
<comment type="function">
    <text evidence="1">One of the primary rRNA binding proteins, it binds directly to 16S rRNA where it helps nucleate assembly of the platform of the 30S subunit by binding and bridging several RNA helices of the 16S rRNA.</text>
</comment>
<comment type="function">
    <text evidence="1">Forms an intersubunit bridge (bridge B4) with the 23S rRNA of the 50S subunit in the ribosome.</text>
</comment>
<comment type="subunit">
    <text evidence="1">Part of the 30S ribosomal subunit. Forms a bridge to the 50S subunit in the 70S ribosome, contacting the 23S rRNA.</text>
</comment>
<comment type="similarity">
    <text evidence="1">Belongs to the universal ribosomal protein uS15 family.</text>
</comment>
<name>RS15_BACP2</name>
<keyword id="KW-0687">Ribonucleoprotein</keyword>
<keyword id="KW-0689">Ribosomal protein</keyword>
<keyword id="KW-0694">RNA-binding</keyword>
<keyword id="KW-0699">rRNA-binding</keyword>
<reference key="1">
    <citation type="journal article" date="2007" name="PLoS ONE">
        <title>Paradoxical DNA repair and peroxide resistance gene conservation in Bacillus pumilus SAFR-032.</title>
        <authorList>
            <person name="Gioia J."/>
            <person name="Yerrapragada S."/>
            <person name="Qin X."/>
            <person name="Jiang H."/>
            <person name="Igboeli O.C."/>
            <person name="Muzny D."/>
            <person name="Dugan-Rocha S."/>
            <person name="Ding Y."/>
            <person name="Hawes A."/>
            <person name="Liu W."/>
            <person name="Perez L."/>
            <person name="Kovar C."/>
            <person name="Dinh H."/>
            <person name="Lee S."/>
            <person name="Nazareth L."/>
            <person name="Blyth P."/>
            <person name="Holder M."/>
            <person name="Buhay C."/>
            <person name="Tirumalai M.R."/>
            <person name="Liu Y."/>
            <person name="Dasgupta I."/>
            <person name="Bokhetache L."/>
            <person name="Fujita M."/>
            <person name="Karouia F."/>
            <person name="Eswara Moorthy P."/>
            <person name="Siefert J."/>
            <person name="Uzman A."/>
            <person name="Buzumbo P."/>
            <person name="Verma A."/>
            <person name="Zwiya H."/>
            <person name="McWilliams B.D."/>
            <person name="Olowu A."/>
            <person name="Clinkenbeard K.D."/>
            <person name="Newcombe D."/>
            <person name="Golebiewski L."/>
            <person name="Petrosino J.F."/>
            <person name="Nicholson W.L."/>
            <person name="Fox G.E."/>
            <person name="Venkateswaran K."/>
            <person name="Highlander S.K."/>
            <person name="Weinstock G.M."/>
        </authorList>
    </citation>
    <scope>NUCLEOTIDE SEQUENCE [LARGE SCALE GENOMIC DNA]</scope>
    <source>
        <strain>SAFR-032</strain>
    </source>
</reference>
<dbReference type="EMBL" id="CP000813">
    <property type="protein sequence ID" value="ABV62253.1"/>
    <property type="molecule type" value="Genomic_DNA"/>
</dbReference>
<dbReference type="RefSeq" id="WP_012009997.1">
    <property type="nucleotide sequence ID" value="NZ_VEIS01000003.1"/>
</dbReference>
<dbReference type="SMR" id="A8FDD6"/>
<dbReference type="STRING" id="315750.BPUM_1571"/>
<dbReference type="GeneID" id="5620834"/>
<dbReference type="KEGG" id="bpu:BPUM_1571"/>
<dbReference type="eggNOG" id="COG0184">
    <property type="taxonomic scope" value="Bacteria"/>
</dbReference>
<dbReference type="HOGENOM" id="CLU_148518_0_0_9"/>
<dbReference type="OrthoDB" id="9799262at2"/>
<dbReference type="Proteomes" id="UP000001355">
    <property type="component" value="Chromosome"/>
</dbReference>
<dbReference type="GO" id="GO:0022627">
    <property type="term" value="C:cytosolic small ribosomal subunit"/>
    <property type="evidence" value="ECO:0007669"/>
    <property type="project" value="TreeGrafter"/>
</dbReference>
<dbReference type="GO" id="GO:0019843">
    <property type="term" value="F:rRNA binding"/>
    <property type="evidence" value="ECO:0007669"/>
    <property type="project" value="UniProtKB-UniRule"/>
</dbReference>
<dbReference type="GO" id="GO:0003735">
    <property type="term" value="F:structural constituent of ribosome"/>
    <property type="evidence" value="ECO:0007669"/>
    <property type="project" value="InterPro"/>
</dbReference>
<dbReference type="GO" id="GO:0006412">
    <property type="term" value="P:translation"/>
    <property type="evidence" value="ECO:0007669"/>
    <property type="project" value="UniProtKB-UniRule"/>
</dbReference>
<dbReference type="CDD" id="cd00353">
    <property type="entry name" value="Ribosomal_S15p_S13e"/>
    <property type="match status" value="1"/>
</dbReference>
<dbReference type="FunFam" id="1.10.287.10:FF:000002">
    <property type="entry name" value="30S ribosomal protein S15"/>
    <property type="match status" value="1"/>
</dbReference>
<dbReference type="Gene3D" id="6.10.250.3130">
    <property type="match status" value="1"/>
</dbReference>
<dbReference type="Gene3D" id="1.10.287.10">
    <property type="entry name" value="S15/NS1, RNA-binding"/>
    <property type="match status" value="1"/>
</dbReference>
<dbReference type="HAMAP" id="MF_01343_B">
    <property type="entry name" value="Ribosomal_uS15_B"/>
    <property type="match status" value="1"/>
</dbReference>
<dbReference type="InterPro" id="IPR000589">
    <property type="entry name" value="Ribosomal_uS15"/>
</dbReference>
<dbReference type="InterPro" id="IPR005290">
    <property type="entry name" value="Ribosomal_uS15_bac-type"/>
</dbReference>
<dbReference type="InterPro" id="IPR009068">
    <property type="entry name" value="uS15_NS1_RNA-bd_sf"/>
</dbReference>
<dbReference type="NCBIfam" id="TIGR00952">
    <property type="entry name" value="S15_bact"/>
    <property type="match status" value="1"/>
</dbReference>
<dbReference type="PANTHER" id="PTHR23321">
    <property type="entry name" value="RIBOSOMAL PROTEIN S15, BACTERIAL AND ORGANELLAR"/>
    <property type="match status" value="1"/>
</dbReference>
<dbReference type="PANTHER" id="PTHR23321:SF26">
    <property type="entry name" value="SMALL RIBOSOMAL SUBUNIT PROTEIN US15M"/>
    <property type="match status" value="1"/>
</dbReference>
<dbReference type="Pfam" id="PF00312">
    <property type="entry name" value="Ribosomal_S15"/>
    <property type="match status" value="1"/>
</dbReference>
<dbReference type="SMART" id="SM01387">
    <property type="entry name" value="Ribosomal_S15"/>
    <property type="match status" value="1"/>
</dbReference>
<dbReference type="SUPFAM" id="SSF47060">
    <property type="entry name" value="S15/NS1 RNA-binding domain"/>
    <property type="match status" value="1"/>
</dbReference>
<dbReference type="PROSITE" id="PS00362">
    <property type="entry name" value="RIBOSOMAL_S15"/>
    <property type="match status" value="1"/>
</dbReference>
<proteinExistence type="inferred from homology"/>
<evidence type="ECO:0000255" key="1">
    <source>
        <dbReference type="HAMAP-Rule" id="MF_01343"/>
    </source>
</evidence>
<evidence type="ECO:0000305" key="2"/>
<organism>
    <name type="scientific">Bacillus pumilus (strain SAFR-032)</name>
    <dbReference type="NCBI Taxonomy" id="315750"/>
    <lineage>
        <taxon>Bacteria</taxon>
        <taxon>Bacillati</taxon>
        <taxon>Bacillota</taxon>
        <taxon>Bacilli</taxon>
        <taxon>Bacillales</taxon>
        <taxon>Bacillaceae</taxon>
        <taxon>Bacillus</taxon>
    </lineage>
</organism>
<gene>
    <name evidence="1" type="primary">rpsO</name>
    <name type="ordered locus">BPUM_1571</name>
</gene>
<protein>
    <recommendedName>
        <fullName evidence="1">Small ribosomal subunit protein uS15</fullName>
    </recommendedName>
    <alternativeName>
        <fullName evidence="2">30S ribosomal protein S15</fullName>
    </alternativeName>
</protein>